<proteinExistence type="evidence at transcript level"/>
<accession>Q653N3</accession>
<accession>A0A0P0WUP0</accession>
<protein>
    <recommendedName>
        <fullName>Microtubule-associated protein 70-3</fullName>
        <shortName>AtMAP70-3</shortName>
    </recommendedName>
    <alternativeName>
        <fullName>70 kDa microtubule-associated protein 3</fullName>
    </alternativeName>
</protein>
<gene>
    <name type="primary">MAP70.3</name>
    <name type="ordered locus">Os06g0251700</name>
    <name type="ordered locus">LOC_Os06g14080</name>
    <name type="ORF">P0431E05.19</name>
</gene>
<sequence>MADGVEEGNAVAPRGPARRRGTVRASLDADEFIALMHGSDPVRVELTRLENELRDKERELGEAQTEIRALRLSERAREKAVEELTDELEKMFEKLKLTESLLDSKNLEVKKINDEKKAAMAAQFAAEATLRRVHAAQKDDDMPPIEAILAPLEAELKLARQEIAKLQDDNRALDRLTKQKEAALLDAERTVEIAMAKAAMVDDLQNKNQELMKQIEICHEENKILDKLQRQKVAEVKKLSLTVKELEEAVLRGGATANVVRDYQRQVQEVNDQKKTLECELARAKVTANRVAVVVANEWKDSNDKVMPVKQWLEERRFLQGEMQQLRDKLAVAERTARSEAQLKEKYQLRLKVLEDGLRGPPSGSSRLPTEGKSFSNGPSRRLSLGGADNMSKLSPNGLLARRSPSFHSRSSLSSSSSLVLKHAKGTSKSFDGGTRSLDRSKINGNGAHLLNRSTDAVRDCETNDSWKGNADEGTIENTNSNTDESNKETANNKSAEMVSGFLYDMLQKEVISLRKACHEKDQSLKDKDDAIEMLAKKVDTLTKAMEVEAKKMRREVAAMEKEVAAMRVDKEQEVKARRLGSSKGTGSSQVLSGSRSSSRSGLTRNYQ</sequence>
<comment type="function">
    <text evidence="1">Plant-specific protein that interact with microtubules.</text>
</comment>
<comment type="subcellular location">
    <subcellularLocation>
        <location evidence="1">Cytoplasm</location>
        <location evidence="1">Cytoskeleton</location>
    </subcellularLocation>
    <text>Associated to microtubules.</text>
</comment>
<comment type="similarity">
    <text evidence="4">Belongs to the MAP70 family.</text>
</comment>
<dbReference type="EMBL" id="AP005107">
    <property type="protein sequence ID" value="BAD45984.1"/>
    <property type="molecule type" value="Genomic_DNA"/>
</dbReference>
<dbReference type="EMBL" id="AP008212">
    <property type="protein sequence ID" value="BAF19211.1"/>
    <property type="molecule type" value="Genomic_DNA"/>
</dbReference>
<dbReference type="EMBL" id="AP014962">
    <property type="protein sequence ID" value="BAS97064.1"/>
    <property type="molecule type" value="Genomic_DNA"/>
</dbReference>
<dbReference type="EMBL" id="AK066534">
    <property type="protein sequence ID" value="BAG90017.1"/>
    <property type="molecule type" value="mRNA"/>
</dbReference>
<dbReference type="RefSeq" id="XP_015644196.1">
    <property type="nucleotide sequence ID" value="XM_015788710.1"/>
</dbReference>
<dbReference type="SMR" id="Q653N3"/>
<dbReference type="FunCoup" id="Q653N3">
    <property type="interactions" value="1178"/>
</dbReference>
<dbReference type="STRING" id="39947.Q653N3"/>
<dbReference type="PaxDb" id="39947-Q653N3"/>
<dbReference type="EnsemblPlants" id="Os06t0251700-01">
    <property type="protein sequence ID" value="Os06t0251700-01"/>
    <property type="gene ID" value="Os06g0251700"/>
</dbReference>
<dbReference type="Gramene" id="Os06t0251700-01">
    <property type="protein sequence ID" value="Os06t0251700-01"/>
    <property type="gene ID" value="Os06g0251700"/>
</dbReference>
<dbReference type="KEGG" id="dosa:Os06g0251700"/>
<dbReference type="eggNOG" id="ENOG502QTPA">
    <property type="taxonomic scope" value="Eukaryota"/>
</dbReference>
<dbReference type="HOGENOM" id="CLU_023069_0_0_1"/>
<dbReference type="InParanoid" id="Q653N3"/>
<dbReference type="OMA" id="YIPWSID"/>
<dbReference type="OrthoDB" id="2014495at2759"/>
<dbReference type="Proteomes" id="UP000000763">
    <property type="component" value="Chromosome 6"/>
</dbReference>
<dbReference type="Proteomes" id="UP000059680">
    <property type="component" value="Chromosome 6"/>
</dbReference>
<dbReference type="GO" id="GO:0005737">
    <property type="term" value="C:cytoplasm"/>
    <property type="evidence" value="ECO:0007669"/>
    <property type="project" value="UniProtKB-KW"/>
</dbReference>
<dbReference type="GO" id="GO:0005874">
    <property type="term" value="C:microtubule"/>
    <property type="evidence" value="ECO:0007669"/>
    <property type="project" value="UniProtKB-KW"/>
</dbReference>
<dbReference type="GO" id="GO:0008017">
    <property type="term" value="F:microtubule binding"/>
    <property type="evidence" value="ECO:0007669"/>
    <property type="project" value="InterPro"/>
</dbReference>
<dbReference type="GO" id="GO:0007010">
    <property type="term" value="P:cytoskeleton organization"/>
    <property type="evidence" value="ECO:0007669"/>
    <property type="project" value="InterPro"/>
</dbReference>
<dbReference type="InterPro" id="IPR009768">
    <property type="entry name" value="MAP70"/>
</dbReference>
<dbReference type="PANTHER" id="PTHR31246">
    <property type="entry name" value="MICROTUBULE-ASSOCIATED PROTEIN 70-2"/>
    <property type="match status" value="1"/>
</dbReference>
<dbReference type="PANTHER" id="PTHR31246:SF4">
    <property type="entry name" value="MICROTUBULE-ASSOCIATED PROTEIN 70-3"/>
    <property type="match status" value="1"/>
</dbReference>
<dbReference type="Pfam" id="PF07058">
    <property type="entry name" value="MAP70"/>
    <property type="match status" value="1"/>
</dbReference>
<feature type="chain" id="PRO_0000409464" description="Microtubule-associated protein 70-3">
    <location>
        <begin position="1"/>
        <end position="608"/>
    </location>
</feature>
<feature type="region of interest" description="Disordered" evidence="3">
    <location>
        <begin position="1"/>
        <end position="23"/>
    </location>
</feature>
<feature type="region of interest" description="Required for targeting to microtubules" evidence="1">
    <location>
        <begin position="224"/>
        <end position="458"/>
    </location>
</feature>
<feature type="region of interest" description="Disordered" evidence="3">
    <location>
        <begin position="354"/>
        <end position="493"/>
    </location>
</feature>
<feature type="region of interest" description="Disordered" evidence="3">
    <location>
        <begin position="570"/>
        <end position="608"/>
    </location>
</feature>
<feature type="coiled-coil region" evidence="2">
    <location>
        <begin position="40"/>
        <end position="346"/>
    </location>
</feature>
<feature type="coiled-coil region" evidence="2">
    <location>
        <begin position="542"/>
        <end position="576"/>
    </location>
</feature>
<feature type="compositionally biased region" description="Polar residues" evidence="3">
    <location>
        <begin position="363"/>
        <end position="379"/>
    </location>
</feature>
<feature type="compositionally biased region" description="Low complexity" evidence="3">
    <location>
        <begin position="402"/>
        <end position="421"/>
    </location>
</feature>
<feature type="compositionally biased region" description="Polar residues" evidence="3">
    <location>
        <begin position="476"/>
        <end position="493"/>
    </location>
</feature>
<feature type="compositionally biased region" description="Low complexity" evidence="3">
    <location>
        <begin position="586"/>
        <end position="608"/>
    </location>
</feature>
<name>MP703_ORYSJ</name>
<keyword id="KW-0175">Coiled coil</keyword>
<keyword id="KW-0963">Cytoplasm</keyword>
<keyword id="KW-0206">Cytoskeleton</keyword>
<keyword id="KW-0493">Microtubule</keyword>
<keyword id="KW-1185">Reference proteome</keyword>
<organism>
    <name type="scientific">Oryza sativa subsp. japonica</name>
    <name type="common">Rice</name>
    <dbReference type="NCBI Taxonomy" id="39947"/>
    <lineage>
        <taxon>Eukaryota</taxon>
        <taxon>Viridiplantae</taxon>
        <taxon>Streptophyta</taxon>
        <taxon>Embryophyta</taxon>
        <taxon>Tracheophyta</taxon>
        <taxon>Spermatophyta</taxon>
        <taxon>Magnoliopsida</taxon>
        <taxon>Liliopsida</taxon>
        <taxon>Poales</taxon>
        <taxon>Poaceae</taxon>
        <taxon>BOP clade</taxon>
        <taxon>Oryzoideae</taxon>
        <taxon>Oryzeae</taxon>
        <taxon>Oryzinae</taxon>
        <taxon>Oryza</taxon>
        <taxon>Oryza sativa</taxon>
    </lineage>
</organism>
<reference key="1">
    <citation type="journal article" date="2005" name="Nature">
        <title>The map-based sequence of the rice genome.</title>
        <authorList>
            <consortium name="International rice genome sequencing project (IRGSP)"/>
        </authorList>
    </citation>
    <scope>NUCLEOTIDE SEQUENCE [LARGE SCALE GENOMIC DNA]</scope>
    <source>
        <strain>cv. Nipponbare</strain>
    </source>
</reference>
<reference key="2">
    <citation type="journal article" date="2008" name="Nucleic Acids Res.">
        <title>The rice annotation project database (RAP-DB): 2008 update.</title>
        <authorList>
            <consortium name="The rice annotation project (RAP)"/>
        </authorList>
    </citation>
    <scope>GENOME REANNOTATION</scope>
    <source>
        <strain>cv. Nipponbare</strain>
    </source>
</reference>
<reference key="3">
    <citation type="journal article" date="2013" name="Rice">
        <title>Improvement of the Oryza sativa Nipponbare reference genome using next generation sequence and optical map data.</title>
        <authorList>
            <person name="Kawahara Y."/>
            <person name="de la Bastide M."/>
            <person name="Hamilton J.P."/>
            <person name="Kanamori H."/>
            <person name="McCombie W.R."/>
            <person name="Ouyang S."/>
            <person name="Schwartz D.C."/>
            <person name="Tanaka T."/>
            <person name="Wu J."/>
            <person name="Zhou S."/>
            <person name="Childs K.L."/>
            <person name="Davidson R.M."/>
            <person name="Lin H."/>
            <person name="Quesada-Ocampo L."/>
            <person name="Vaillancourt B."/>
            <person name="Sakai H."/>
            <person name="Lee S.S."/>
            <person name="Kim J."/>
            <person name="Numa H."/>
            <person name="Itoh T."/>
            <person name="Buell C.R."/>
            <person name="Matsumoto T."/>
        </authorList>
    </citation>
    <scope>GENOME REANNOTATION</scope>
    <source>
        <strain>cv. Nipponbare</strain>
    </source>
</reference>
<reference key="4">
    <citation type="journal article" date="2003" name="Science">
        <title>Collection, mapping, and annotation of over 28,000 cDNA clones from japonica rice.</title>
        <authorList>
            <consortium name="The rice full-length cDNA consortium"/>
        </authorList>
    </citation>
    <scope>NUCLEOTIDE SEQUENCE [LARGE SCALE MRNA]</scope>
    <source>
        <strain>cv. Nipponbare</strain>
    </source>
</reference>
<evidence type="ECO:0000250" key="1"/>
<evidence type="ECO:0000255" key="2"/>
<evidence type="ECO:0000256" key="3">
    <source>
        <dbReference type="SAM" id="MobiDB-lite"/>
    </source>
</evidence>
<evidence type="ECO:0000305" key="4"/>